<keyword id="KW-0067">ATP-binding</keyword>
<keyword id="KW-0227">DNA damage</keyword>
<keyword id="KW-0234">DNA repair</keyword>
<keyword id="KW-0238">DNA-binding</keyword>
<keyword id="KW-0269">Exonuclease</keyword>
<keyword id="KW-0347">Helicase</keyword>
<keyword id="KW-0378">Hydrolase</keyword>
<keyword id="KW-0540">Nuclease</keyword>
<keyword id="KW-0547">Nucleotide-binding</keyword>
<name>ADDB_STRPM</name>
<organism>
    <name type="scientific">Streptococcus pyogenes serotype M28 (strain MGAS6180)</name>
    <dbReference type="NCBI Taxonomy" id="319701"/>
    <lineage>
        <taxon>Bacteria</taxon>
        <taxon>Bacillati</taxon>
        <taxon>Bacillota</taxon>
        <taxon>Bacilli</taxon>
        <taxon>Lactobacillales</taxon>
        <taxon>Streptococcaceae</taxon>
        <taxon>Streptococcus</taxon>
    </lineage>
</organism>
<sequence length="1071" mass="124207">MKLIYTEMSYSMTEILVNEARKAADQGYRVFYIAPNSLSFEKEREVLTLLPERGTFSIIVTRFVQMSRYFTVESSPSKQHLDDTTLAMIFYRALMQLKPEDLPSYGRLQNNSVFIEQLVELYKELKNAQLSVHDLTGLDHPQKQEDLIKIIELAETIMIQQDYNQDSPLQSFARAIKLGLLNNQLSKTVIVIDGFSRFSAEEDYLLSLLNNNCQEVIIGSYVSQKAYQKSFIKGNIYEASLHFLQDLAQKYHIKPVFATSNQVFKPAFSRLTQLFEATHDFSQVDWQLQKNDLDHFSLWQCHHQKEEIEHVAKSIRQKLYEGYRYKDILVLLGDMDAYQLQIGPIFDKFEIPYYLGKAEPMAAHPLVQFIESLERSQRYNWRREDILNMLKSGLFGCFDDSDIDRFEEYTQFADIKGFTKFSKPFTINSSRQYPLDFLNEMRQDIVLPLQELFKSQKQLGASLVDKLILFFKKIRLAENMQGLAQSQLEVEKNEEVWKRFTDILTSFHHIFGQEKLRLSDCLALIKTGMKSAQYRVVPATLDVVTIKSYDLVQPHSKPFVYAIGLTQSHFPKQIHHSGLLSDQERARINEIRNYRHFDIASAENSKKNHQTALSLFNAATKELVLSVPTVINETFDDLSPYLKELISFGLPLLDKGKNYLSYDNSDIGNYKALLSQIIAINRQDLIEMSDQDKMFWTVVLRYLRKQLRKQQLELPTSDYRLSTKPLSKEVIEVCFPKGIPLKLSATALTVFYNNQYNYFLKYVLNLNKTESIHPDSRIHGQYLHRVFERLMKDHTQEPFDNKLKQAIYHTNQESFFQQVYQDNAEAEYSLAILEDIVRSTAPILQLNQNIKVIDQEKNFHLDMGNEILVHGIIDRIDQLSDGSLGIVDYKSSANQFDIGTFYNGLSPQLVTYLAALKQIAPHDINQLFGAMYLHLQDPKLDLVTFKQIDNTLVESIYKALTYKGIFSEVEKEHLSTGAYQTKNALYSNDELETLLNYNKYLYLKAAKHIKKGHFLINPYTSDGKTVQGDQLKAITRFEADLDMAQARRLVTLPAKEKKECFLTLMRKESHL</sequence>
<gene>
    <name evidence="1" type="primary">rexB</name>
    <name type="ordered locus">M28_Spy0573</name>
</gene>
<feature type="chain" id="PRO_0000379406" description="ATP-dependent helicase/deoxyribonuclease subunit B">
    <location>
        <begin position="1"/>
        <end position="1071"/>
    </location>
</feature>
<protein>
    <recommendedName>
        <fullName evidence="1">ATP-dependent helicase/deoxyribonuclease subunit B</fullName>
        <ecNumber evidence="1">3.1.-.-</ecNumber>
    </recommendedName>
    <alternativeName>
        <fullName evidence="1">ATP-dependent helicase/nuclease subunit RexB</fullName>
    </alternativeName>
</protein>
<proteinExistence type="inferred from homology"/>
<comment type="function">
    <text evidence="1">The heterodimer acts as both an ATP-dependent DNA helicase and an ATP-dependent, dual-direction single-stranded exonuclease. Recognizes the chi site generating a DNA molecule suitable for the initiation of homologous recombination. This subunit has 5' -&gt; 3' nuclease activity but not helicase activity.</text>
</comment>
<comment type="cofactor">
    <cofactor evidence="1">
        <name>Mg(2+)</name>
        <dbReference type="ChEBI" id="CHEBI:18420"/>
    </cofactor>
</comment>
<comment type="subunit">
    <text evidence="1">Heterodimer of AddA and RexB.</text>
</comment>
<comment type="miscellaneous">
    <text evidence="1">Despite having helicase-like domains, this subunit does not have helicase activity.</text>
</comment>
<comment type="similarity">
    <text evidence="1">Belongs to the helicase family. AddB/RexB type 2 subfamily.</text>
</comment>
<reference key="1">
    <citation type="journal article" date="2005" name="J. Infect. Dis.">
        <title>Genome sequence of a serotype M28 strain of group A Streptococcus: potential new insights into puerperal sepsis and bacterial disease specificity.</title>
        <authorList>
            <person name="Green N.M."/>
            <person name="Zhang S."/>
            <person name="Porcella S.F."/>
            <person name="Nagiec M.J."/>
            <person name="Barbian K.D."/>
            <person name="Beres S.B."/>
            <person name="Lefebvre R.B."/>
            <person name="Musser J.M."/>
        </authorList>
    </citation>
    <scope>NUCLEOTIDE SEQUENCE [LARGE SCALE GENOMIC DNA]</scope>
    <source>
        <strain>MGAS6180</strain>
    </source>
</reference>
<accession>Q48UB9</accession>
<evidence type="ECO:0000255" key="1">
    <source>
        <dbReference type="HAMAP-Rule" id="MF_01453"/>
    </source>
</evidence>
<dbReference type="EC" id="3.1.-.-" evidence="1"/>
<dbReference type="EMBL" id="CP000056">
    <property type="protein sequence ID" value="AAX71687.1"/>
    <property type="molecule type" value="Genomic_DNA"/>
</dbReference>
<dbReference type="RefSeq" id="WP_011284663.1">
    <property type="nucleotide sequence ID" value="NC_007296.2"/>
</dbReference>
<dbReference type="SMR" id="Q48UB9"/>
<dbReference type="KEGG" id="spb:M28_Spy0573"/>
<dbReference type="HOGENOM" id="CLU_007838_1_0_9"/>
<dbReference type="GO" id="GO:0008409">
    <property type="term" value="F:5'-3' exonuclease activity"/>
    <property type="evidence" value="ECO:0007669"/>
    <property type="project" value="UniProtKB-UniRule"/>
</dbReference>
<dbReference type="GO" id="GO:0005524">
    <property type="term" value="F:ATP binding"/>
    <property type="evidence" value="ECO:0007669"/>
    <property type="project" value="UniProtKB-UniRule"/>
</dbReference>
<dbReference type="GO" id="GO:0003690">
    <property type="term" value="F:double-stranded DNA binding"/>
    <property type="evidence" value="ECO:0007669"/>
    <property type="project" value="UniProtKB-UniRule"/>
</dbReference>
<dbReference type="GO" id="GO:0004386">
    <property type="term" value="F:helicase activity"/>
    <property type="evidence" value="ECO:0007669"/>
    <property type="project" value="UniProtKB-KW"/>
</dbReference>
<dbReference type="GO" id="GO:0016817">
    <property type="term" value="F:hydrolase activity, acting on acid anhydrides"/>
    <property type="evidence" value="ECO:0007669"/>
    <property type="project" value="InterPro"/>
</dbReference>
<dbReference type="GO" id="GO:0000724">
    <property type="term" value="P:double-strand break repair via homologous recombination"/>
    <property type="evidence" value="ECO:0007669"/>
    <property type="project" value="UniProtKB-UniRule"/>
</dbReference>
<dbReference type="Gene3D" id="3.90.320.10">
    <property type="match status" value="1"/>
</dbReference>
<dbReference type="Gene3D" id="3.40.50.300">
    <property type="entry name" value="P-loop containing nucleotide triphosphate hydrolases"/>
    <property type="match status" value="3"/>
</dbReference>
<dbReference type="HAMAP" id="MF_01453">
    <property type="entry name" value="AddB_type2"/>
    <property type="match status" value="1"/>
</dbReference>
<dbReference type="InterPro" id="IPR049035">
    <property type="entry name" value="ADDB_N"/>
</dbReference>
<dbReference type="InterPro" id="IPR014141">
    <property type="entry name" value="DNA_helicase_suRexB"/>
</dbReference>
<dbReference type="InterPro" id="IPR027417">
    <property type="entry name" value="P-loop_NTPase"/>
</dbReference>
<dbReference type="InterPro" id="IPR011604">
    <property type="entry name" value="PDDEXK-like_dom_sf"/>
</dbReference>
<dbReference type="InterPro" id="IPR038726">
    <property type="entry name" value="PDDEXK_AddAB-type"/>
</dbReference>
<dbReference type="InterPro" id="IPR011335">
    <property type="entry name" value="Restrct_endonuc-II-like"/>
</dbReference>
<dbReference type="NCBIfam" id="TIGR02774">
    <property type="entry name" value="rexB_recomb"/>
    <property type="match status" value="1"/>
</dbReference>
<dbReference type="PANTHER" id="PTHR30591">
    <property type="entry name" value="RECBCD ENZYME SUBUNIT RECC"/>
    <property type="match status" value="1"/>
</dbReference>
<dbReference type="PANTHER" id="PTHR30591:SF1">
    <property type="entry name" value="RECBCD ENZYME SUBUNIT RECC"/>
    <property type="match status" value="1"/>
</dbReference>
<dbReference type="Pfam" id="PF21445">
    <property type="entry name" value="ADDB_N"/>
    <property type="match status" value="1"/>
</dbReference>
<dbReference type="Pfam" id="PF12705">
    <property type="entry name" value="PDDEXK_1"/>
    <property type="match status" value="1"/>
</dbReference>
<dbReference type="SUPFAM" id="SSF52540">
    <property type="entry name" value="P-loop containing nucleoside triphosphate hydrolases"/>
    <property type="match status" value="1"/>
</dbReference>
<dbReference type="SUPFAM" id="SSF52980">
    <property type="entry name" value="Restriction endonuclease-like"/>
    <property type="match status" value="1"/>
</dbReference>